<name>YISX_BACSU</name>
<organism>
    <name type="scientific">Bacillus subtilis (strain 168)</name>
    <dbReference type="NCBI Taxonomy" id="224308"/>
    <lineage>
        <taxon>Bacteria</taxon>
        <taxon>Bacillati</taxon>
        <taxon>Bacillota</taxon>
        <taxon>Bacilli</taxon>
        <taxon>Bacillales</taxon>
        <taxon>Bacillaceae</taxon>
        <taxon>Bacillus</taxon>
    </lineage>
</organism>
<protein>
    <recommendedName>
        <fullName>Uncharacterized protein YisX</fullName>
    </recommendedName>
</protein>
<feature type="chain" id="PRO_0000388802" description="Uncharacterized protein YisX">
    <location>
        <begin position="1"/>
        <end position="212"/>
    </location>
</feature>
<feature type="domain" description="Pentapeptide repeat 1">
    <location>
        <begin position="63"/>
        <end position="102"/>
    </location>
</feature>
<feature type="domain" description="Pentapeptide repeat 2">
    <location>
        <begin position="103"/>
        <end position="142"/>
    </location>
</feature>
<feature type="domain" description="Pentapeptide repeat 3">
    <location>
        <begin position="143"/>
        <end position="182"/>
    </location>
</feature>
<sequence length="212" mass="23730">MNKIAIQKPNIPENLQTADFHDAVTQDDVISMHLFEDCTICGEDIERLCVEKTVFRNVVFIDVSFRHIELTDVIFEKCDLSNADFSGAVIHRTSVKQSKMVGMNVAEATLRNVSFEECHGHFSSFSYSNMKQVRFDHCALMQSECSDTVLQQTHFDGCELEGASFTGTSLQNMDISTCRFEQLHVSLDKLKGCKIAPEHAIAFARALGAVIV</sequence>
<reference key="1">
    <citation type="journal article" date="1997" name="Microbiology">
        <title>A Bacillus subtilis chromosome segment at the 100 degrees to 102 degrees position encoding 11 membrane proteins.</title>
        <authorList>
            <person name="Roche B."/>
            <person name="Autret S."/>
            <person name="Levine A."/>
            <person name="Vannier F."/>
            <person name="Medina N."/>
            <person name="Seror S.J."/>
        </authorList>
    </citation>
    <scope>NUCLEOTIDE SEQUENCE [GENOMIC DNA]</scope>
    <source>
        <strain>168</strain>
    </source>
</reference>
<reference key="2">
    <citation type="journal article" date="1997" name="Nature">
        <title>The complete genome sequence of the Gram-positive bacterium Bacillus subtilis.</title>
        <authorList>
            <person name="Kunst F."/>
            <person name="Ogasawara N."/>
            <person name="Moszer I."/>
            <person name="Albertini A.M."/>
            <person name="Alloni G."/>
            <person name="Azevedo V."/>
            <person name="Bertero M.G."/>
            <person name="Bessieres P."/>
            <person name="Bolotin A."/>
            <person name="Borchert S."/>
            <person name="Borriss R."/>
            <person name="Boursier L."/>
            <person name="Brans A."/>
            <person name="Braun M."/>
            <person name="Brignell S.C."/>
            <person name="Bron S."/>
            <person name="Brouillet S."/>
            <person name="Bruschi C.V."/>
            <person name="Caldwell B."/>
            <person name="Capuano V."/>
            <person name="Carter N.M."/>
            <person name="Choi S.-K."/>
            <person name="Codani J.-J."/>
            <person name="Connerton I.F."/>
            <person name="Cummings N.J."/>
            <person name="Daniel R.A."/>
            <person name="Denizot F."/>
            <person name="Devine K.M."/>
            <person name="Duesterhoeft A."/>
            <person name="Ehrlich S.D."/>
            <person name="Emmerson P.T."/>
            <person name="Entian K.-D."/>
            <person name="Errington J."/>
            <person name="Fabret C."/>
            <person name="Ferrari E."/>
            <person name="Foulger D."/>
            <person name="Fritz C."/>
            <person name="Fujita M."/>
            <person name="Fujita Y."/>
            <person name="Fuma S."/>
            <person name="Galizzi A."/>
            <person name="Galleron N."/>
            <person name="Ghim S.-Y."/>
            <person name="Glaser P."/>
            <person name="Goffeau A."/>
            <person name="Golightly E.J."/>
            <person name="Grandi G."/>
            <person name="Guiseppi G."/>
            <person name="Guy B.J."/>
            <person name="Haga K."/>
            <person name="Haiech J."/>
            <person name="Harwood C.R."/>
            <person name="Henaut A."/>
            <person name="Hilbert H."/>
            <person name="Holsappel S."/>
            <person name="Hosono S."/>
            <person name="Hullo M.-F."/>
            <person name="Itaya M."/>
            <person name="Jones L.-M."/>
            <person name="Joris B."/>
            <person name="Karamata D."/>
            <person name="Kasahara Y."/>
            <person name="Klaerr-Blanchard M."/>
            <person name="Klein C."/>
            <person name="Kobayashi Y."/>
            <person name="Koetter P."/>
            <person name="Koningstein G."/>
            <person name="Krogh S."/>
            <person name="Kumano M."/>
            <person name="Kurita K."/>
            <person name="Lapidus A."/>
            <person name="Lardinois S."/>
            <person name="Lauber J."/>
            <person name="Lazarevic V."/>
            <person name="Lee S.-M."/>
            <person name="Levine A."/>
            <person name="Liu H."/>
            <person name="Masuda S."/>
            <person name="Mauel C."/>
            <person name="Medigue C."/>
            <person name="Medina N."/>
            <person name="Mellado R.P."/>
            <person name="Mizuno M."/>
            <person name="Moestl D."/>
            <person name="Nakai S."/>
            <person name="Noback M."/>
            <person name="Noone D."/>
            <person name="O'Reilly M."/>
            <person name="Ogawa K."/>
            <person name="Ogiwara A."/>
            <person name="Oudega B."/>
            <person name="Park S.-H."/>
            <person name="Parro V."/>
            <person name="Pohl T.M."/>
            <person name="Portetelle D."/>
            <person name="Porwollik S."/>
            <person name="Prescott A.M."/>
            <person name="Presecan E."/>
            <person name="Pujic P."/>
            <person name="Purnelle B."/>
            <person name="Rapoport G."/>
            <person name="Rey M."/>
            <person name="Reynolds S."/>
            <person name="Rieger M."/>
            <person name="Rivolta C."/>
            <person name="Rocha E."/>
            <person name="Roche B."/>
            <person name="Rose M."/>
            <person name="Sadaie Y."/>
            <person name="Sato T."/>
            <person name="Scanlan E."/>
            <person name="Schleich S."/>
            <person name="Schroeter R."/>
            <person name="Scoffone F."/>
            <person name="Sekiguchi J."/>
            <person name="Sekowska A."/>
            <person name="Seror S.J."/>
            <person name="Serror P."/>
            <person name="Shin B.-S."/>
            <person name="Soldo B."/>
            <person name="Sorokin A."/>
            <person name="Tacconi E."/>
            <person name="Takagi T."/>
            <person name="Takahashi H."/>
            <person name="Takemaru K."/>
            <person name="Takeuchi M."/>
            <person name="Tamakoshi A."/>
            <person name="Tanaka T."/>
            <person name="Terpstra P."/>
            <person name="Tognoni A."/>
            <person name="Tosato V."/>
            <person name="Uchiyama S."/>
            <person name="Vandenbol M."/>
            <person name="Vannier F."/>
            <person name="Vassarotti A."/>
            <person name="Viari A."/>
            <person name="Wambutt R."/>
            <person name="Wedler E."/>
            <person name="Wedler H."/>
            <person name="Weitzenegger T."/>
            <person name="Winters P."/>
            <person name="Wipat A."/>
            <person name="Yamamoto H."/>
            <person name="Yamane K."/>
            <person name="Yasumoto K."/>
            <person name="Yata K."/>
            <person name="Yoshida K."/>
            <person name="Yoshikawa H.-F."/>
            <person name="Zumstein E."/>
            <person name="Yoshikawa H."/>
            <person name="Danchin A."/>
        </authorList>
    </citation>
    <scope>NUCLEOTIDE SEQUENCE [LARGE SCALE GENOMIC DNA]</scope>
    <source>
        <strain>168</strain>
    </source>
</reference>
<dbReference type="EMBL" id="Y09476">
    <property type="protein sequence ID" value="CAA70653.1"/>
    <property type="molecule type" value="Genomic_DNA"/>
</dbReference>
<dbReference type="EMBL" id="AL009126">
    <property type="protein sequence ID" value="CAB12929.1"/>
    <property type="molecule type" value="Genomic_DNA"/>
</dbReference>
<dbReference type="PIR" id="G69838">
    <property type="entry name" value="G69838"/>
</dbReference>
<dbReference type="RefSeq" id="NP_388970.1">
    <property type="nucleotide sequence ID" value="NC_000964.3"/>
</dbReference>
<dbReference type="RefSeq" id="WP_003233060.1">
    <property type="nucleotide sequence ID" value="NZ_OZ025638.1"/>
</dbReference>
<dbReference type="SMR" id="O06733"/>
<dbReference type="FunCoup" id="O06733">
    <property type="interactions" value="53"/>
</dbReference>
<dbReference type="PaxDb" id="224308-BSU10890"/>
<dbReference type="EnsemblBacteria" id="CAB12929">
    <property type="protein sequence ID" value="CAB12929"/>
    <property type="gene ID" value="BSU_10890"/>
</dbReference>
<dbReference type="GeneID" id="939343"/>
<dbReference type="KEGG" id="bsu:BSU10890"/>
<dbReference type="PATRIC" id="fig|224308.179.peg.1171"/>
<dbReference type="eggNOG" id="COG1357">
    <property type="taxonomic scope" value="Bacteria"/>
</dbReference>
<dbReference type="InParanoid" id="O06733"/>
<dbReference type="OrthoDB" id="9798656at2"/>
<dbReference type="PhylomeDB" id="O06733"/>
<dbReference type="BioCyc" id="BSUB:BSU10890-MONOMER"/>
<dbReference type="Proteomes" id="UP000001570">
    <property type="component" value="Chromosome"/>
</dbReference>
<dbReference type="Gene3D" id="2.160.20.80">
    <property type="entry name" value="E3 ubiquitin-protein ligase SopA"/>
    <property type="match status" value="1"/>
</dbReference>
<dbReference type="InterPro" id="IPR001646">
    <property type="entry name" value="5peptide_repeat"/>
</dbReference>
<dbReference type="InterPro" id="IPR052949">
    <property type="entry name" value="PA_immunity-related"/>
</dbReference>
<dbReference type="PANTHER" id="PTHR42999">
    <property type="entry name" value="ANTIBIOTIC RESISTANCE PROTEIN MCBG"/>
    <property type="match status" value="1"/>
</dbReference>
<dbReference type="PANTHER" id="PTHR42999:SF1">
    <property type="entry name" value="PENTAPEPTIDE REPEAT-CONTAINING PROTEIN"/>
    <property type="match status" value="1"/>
</dbReference>
<dbReference type="Pfam" id="PF00805">
    <property type="entry name" value="Pentapeptide"/>
    <property type="match status" value="1"/>
</dbReference>
<dbReference type="Pfam" id="PF13599">
    <property type="entry name" value="Pentapeptide_4"/>
    <property type="match status" value="1"/>
</dbReference>
<dbReference type="SUPFAM" id="SSF141571">
    <property type="entry name" value="Pentapeptide repeat-like"/>
    <property type="match status" value="1"/>
</dbReference>
<accession>O06733</accession>
<accession>Q796Q5</accession>
<keyword id="KW-1185">Reference proteome</keyword>
<keyword id="KW-0677">Repeat</keyword>
<gene>
    <name type="primary">yisX</name>
    <name type="ordered locus">BSU10890</name>
</gene>
<proteinExistence type="predicted"/>